<accession>Q1D6I5</accession>
<feature type="chain" id="PRO_1000049299" description="Small ribosomal subunit protein bS16">
    <location>
        <begin position="1"/>
        <end position="86"/>
    </location>
</feature>
<sequence length="86" mass="9451">MAVVLRLARAGVKKKPYYHVVATDSRNPRDGKFIEAVGAYDPNQEPPKVEFNEERLNYWLKTGATPSETVADLIKVAGKAKPAPAV</sequence>
<organism>
    <name type="scientific">Myxococcus xanthus (strain DK1622)</name>
    <dbReference type="NCBI Taxonomy" id="246197"/>
    <lineage>
        <taxon>Bacteria</taxon>
        <taxon>Pseudomonadati</taxon>
        <taxon>Myxococcota</taxon>
        <taxon>Myxococcia</taxon>
        <taxon>Myxococcales</taxon>
        <taxon>Cystobacterineae</taxon>
        <taxon>Myxococcaceae</taxon>
        <taxon>Myxococcus</taxon>
    </lineage>
</organism>
<dbReference type="EMBL" id="CP000113">
    <property type="protein sequence ID" value="ABF88726.1"/>
    <property type="molecule type" value="Genomic_DNA"/>
</dbReference>
<dbReference type="RefSeq" id="WP_011553574.1">
    <property type="nucleotide sequence ID" value="NC_008095.1"/>
</dbReference>
<dbReference type="SMR" id="Q1D6I5"/>
<dbReference type="STRING" id="246197.MXAN_3545"/>
<dbReference type="EnsemblBacteria" id="ABF88726">
    <property type="protein sequence ID" value="ABF88726"/>
    <property type="gene ID" value="MXAN_3545"/>
</dbReference>
<dbReference type="GeneID" id="41360890"/>
<dbReference type="KEGG" id="mxa:MXAN_3545"/>
<dbReference type="eggNOG" id="COG0228">
    <property type="taxonomic scope" value="Bacteria"/>
</dbReference>
<dbReference type="HOGENOM" id="CLU_100590_5_0_7"/>
<dbReference type="OrthoDB" id="9807878at2"/>
<dbReference type="Proteomes" id="UP000002402">
    <property type="component" value="Chromosome"/>
</dbReference>
<dbReference type="GO" id="GO:0005737">
    <property type="term" value="C:cytoplasm"/>
    <property type="evidence" value="ECO:0007669"/>
    <property type="project" value="UniProtKB-ARBA"/>
</dbReference>
<dbReference type="GO" id="GO:0015935">
    <property type="term" value="C:small ribosomal subunit"/>
    <property type="evidence" value="ECO:0007669"/>
    <property type="project" value="TreeGrafter"/>
</dbReference>
<dbReference type="GO" id="GO:0003735">
    <property type="term" value="F:structural constituent of ribosome"/>
    <property type="evidence" value="ECO:0007669"/>
    <property type="project" value="InterPro"/>
</dbReference>
<dbReference type="GO" id="GO:0006412">
    <property type="term" value="P:translation"/>
    <property type="evidence" value="ECO:0007669"/>
    <property type="project" value="UniProtKB-UniRule"/>
</dbReference>
<dbReference type="Gene3D" id="3.30.1320.10">
    <property type="match status" value="1"/>
</dbReference>
<dbReference type="HAMAP" id="MF_00385">
    <property type="entry name" value="Ribosomal_bS16"/>
    <property type="match status" value="1"/>
</dbReference>
<dbReference type="InterPro" id="IPR000307">
    <property type="entry name" value="Ribosomal_bS16"/>
</dbReference>
<dbReference type="InterPro" id="IPR023803">
    <property type="entry name" value="Ribosomal_bS16_dom_sf"/>
</dbReference>
<dbReference type="NCBIfam" id="TIGR00002">
    <property type="entry name" value="S16"/>
    <property type="match status" value="1"/>
</dbReference>
<dbReference type="PANTHER" id="PTHR12919">
    <property type="entry name" value="30S RIBOSOMAL PROTEIN S16"/>
    <property type="match status" value="1"/>
</dbReference>
<dbReference type="PANTHER" id="PTHR12919:SF20">
    <property type="entry name" value="SMALL RIBOSOMAL SUBUNIT PROTEIN BS16M"/>
    <property type="match status" value="1"/>
</dbReference>
<dbReference type="Pfam" id="PF00886">
    <property type="entry name" value="Ribosomal_S16"/>
    <property type="match status" value="1"/>
</dbReference>
<dbReference type="SUPFAM" id="SSF54565">
    <property type="entry name" value="Ribosomal protein S16"/>
    <property type="match status" value="1"/>
</dbReference>
<name>RS16_MYXXD</name>
<proteinExistence type="inferred from homology"/>
<protein>
    <recommendedName>
        <fullName evidence="1">Small ribosomal subunit protein bS16</fullName>
    </recommendedName>
    <alternativeName>
        <fullName evidence="2">30S ribosomal protein S16</fullName>
    </alternativeName>
</protein>
<keyword id="KW-1185">Reference proteome</keyword>
<keyword id="KW-0687">Ribonucleoprotein</keyword>
<keyword id="KW-0689">Ribosomal protein</keyword>
<gene>
    <name evidence="1" type="primary">rpsP</name>
    <name type="ordered locus">MXAN_3545</name>
</gene>
<evidence type="ECO:0000255" key="1">
    <source>
        <dbReference type="HAMAP-Rule" id="MF_00385"/>
    </source>
</evidence>
<evidence type="ECO:0000305" key="2"/>
<reference key="1">
    <citation type="journal article" date="2006" name="Proc. Natl. Acad. Sci. U.S.A.">
        <title>Evolution of sensory complexity recorded in a myxobacterial genome.</title>
        <authorList>
            <person name="Goldman B.S."/>
            <person name="Nierman W.C."/>
            <person name="Kaiser D."/>
            <person name="Slater S.C."/>
            <person name="Durkin A.S."/>
            <person name="Eisen J.A."/>
            <person name="Ronning C.M."/>
            <person name="Barbazuk W.B."/>
            <person name="Blanchard M."/>
            <person name="Field C."/>
            <person name="Halling C."/>
            <person name="Hinkle G."/>
            <person name="Iartchuk O."/>
            <person name="Kim H.S."/>
            <person name="Mackenzie C."/>
            <person name="Madupu R."/>
            <person name="Miller N."/>
            <person name="Shvartsbeyn A."/>
            <person name="Sullivan S.A."/>
            <person name="Vaudin M."/>
            <person name="Wiegand R."/>
            <person name="Kaplan H.B."/>
        </authorList>
    </citation>
    <scope>NUCLEOTIDE SEQUENCE [LARGE SCALE GENOMIC DNA]</scope>
    <source>
        <strain>DK1622</strain>
    </source>
</reference>
<comment type="similarity">
    <text evidence="1">Belongs to the bacterial ribosomal protein bS16 family.</text>
</comment>